<evidence type="ECO:0000250" key="1"/>
<evidence type="ECO:0000255" key="2"/>
<evidence type="ECO:0000305" key="3"/>
<comment type="function">
    <text evidence="1">Probable beta-1,4-glucan synthase rather involved in the synthesis of the xyloglucan backbone than cellulose. Seems to work simultaneously with xyloglucan 6-xylosyltransferase. Xyloglucan is a noncellulosic polysaccharides of plant cell wall and consists of a glucan backbone substituted by xylose, galactose and fucose (By similarity).</text>
</comment>
<comment type="subcellular location">
    <subcellularLocation>
        <location evidence="3">Golgi apparatus membrane</location>
        <topology evidence="3">Multi-pass membrane protein</topology>
    </subcellularLocation>
</comment>
<comment type="similarity">
    <text evidence="3">Belongs to the glycosyltransferase 2 family. Plant cellulose synthase-like C subfamily.</text>
</comment>
<comment type="sequence caution" evidence="3">
    <conflict type="erroneous initiation">
        <sequence resource="EMBL-CDS" id="BAD33623"/>
    </conflict>
</comment>
<comment type="sequence caution" evidence="3">
    <conflict type="erroneous initiation">
        <sequence resource="EMBL-CDS" id="BAD34098"/>
    </conflict>
</comment>
<comment type="sequence caution" evidence="3">
    <conflict type="erroneous initiation">
        <sequence resource="EMBL-CDS" id="BAF25144"/>
    </conflict>
</comment>
<comment type="sequence caution" evidence="3">
    <conflict type="frameshift">
        <sequence resource="EMBL" id="CM000146"/>
    </conflict>
</comment>
<sequence>MAPPGVGVGVAYLWGKGRGGRKGTPVVVTMESPNYSVVEVDGPDAEAELRTAAVAMDKGGGRGRSRSRTARQLTWVLLLRARRAAGRLASFAAAAARRFRRSPADAADELGRGRGRLMYGFIRGFLALSLLALAVELAAYWNGWRLRRPELHVPEAVEIEGWAHSAYISWMSFRADYIRRPIEFLSKACILLFVIQSMDRLVLCLGCFWIKLRKIKPRIEGDPFREGSGYQHPMVLVQIPMCNEKEVYEQSISAACQLDWPREKFLIQVLDDSSDESIQLLIKAEVSKWSHQGVNIVYRHRVLRTGYKAGNLKSAMSCDYVKDYEFVAIFDADFQPTPDFLKKTIPHFEGNPELGLVQARWSFVNKDENLLTRLQNINLCFHFEVEQQVNGVFLNFFGFNGTAGVWRIQALEESGGWLERTTVEDMDIAVRAHLNGWKFIFLNDVKVLCELPESYEAYRKQQHRWHSGPMHLFRLCLPDILTAKISSWKKANLILLFFLLRKLILPFYSFTLFCVILPLTMFVPEAELPVWVICYVPVCMSFLNILPSPRSFPFIVPYLLFENTMSVTKFNAMVSGLFKLGSSYEWIVTKKSGRSSESDLSTAAERDTKDLTLPRLQKQISESELIELKMQKERQEKAPLGAKKANKVYKKELALSLLLLTAATRSLLSAQGIHFYFLLFQGVSFLFVGLDLIGEQID</sequence>
<dbReference type="EC" id="2.4.1.-"/>
<dbReference type="EMBL" id="AP005568">
    <property type="protein sequence ID" value="BAD33623.1"/>
    <property type="status" value="ALT_INIT"/>
    <property type="molecule type" value="Genomic_DNA"/>
</dbReference>
<dbReference type="EMBL" id="AP005886">
    <property type="protein sequence ID" value="BAD34098.1"/>
    <property type="status" value="ALT_INIT"/>
    <property type="molecule type" value="Genomic_DNA"/>
</dbReference>
<dbReference type="EMBL" id="AP008215">
    <property type="protein sequence ID" value="BAF25144.1"/>
    <property type="status" value="ALT_INIT"/>
    <property type="molecule type" value="Genomic_DNA"/>
</dbReference>
<dbReference type="EMBL" id="AP014965">
    <property type="status" value="NOT_ANNOTATED_CDS"/>
    <property type="molecule type" value="Genomic_DNA"/>
</dbReference>
<dbReference type="EMBL" id="CM000146">
    <property type="status" value="NOT_ANNOTATED_CDS"/>
    <property type="molecule type" value="Genomic_DNA"/>
</dbReference>
<dbReference type="RefSeq" id="XP_015612682.1">
    <property type="nucleotide sequence ID" value="XM_015757196.1"/>
</dbReference>
<dbReference type="SMR" id="Q69L19"/>
<dbReference type="FunCoup" id="Q69L19">
    <property type="interactions" value="16"/>
</dbReference>
<dbReference type="STRING" id="39947.Q69L19"/>
<dbReference type="CAZy" id="GT2">
    <property type="family name" value="Glycosyltransferase Family 2"/>
</dbReference>
<dbReference type="PaxDb" id="39947-Q69L19"/>
<dbReference type="KEGG" id="dosa:Os09g0428000"/>
<dbReference type="eggNOG" id="ENOG502QTBF">
    <property type="taxonomic scope" value="Eukaryota"/>
</dbReference>
<dbReference type="HOGENOM" id="CLU_012856_1_1_1"/>
<dbReference type="InParanoid" id="Q69L19"/>
<dbReference type="OrthoDB" id="72851at2759"/>
<dbReference type="Proteomes" id="UP000000763">
    <property type="component" value="Chromosome 9"/>
</dbReference>
<dbReference type="Proteomes" id="UP000007752">
    <property type="component" value="Chromosome 9"/>
</dbReference>
<dbReference type="Proteomes" id="UP000059680">
    <property type="component" value="Chromosome 9"/>
</dbReference>
<dbReference type="GO" id="GO:0005794">
    <property type="term" value="C:Golgi apparatus"/>
    <property type="evidence" value="ECO:0000318"/>
    <property type="project" value="GO_Central"/>
</dbReference>
<dbReference type="GO" id="GO:0000139">
    <property type="term" value="C:Golgi membrane"/>
    <property type="evidence" value="ECO:0007669"/>
    <property type="project" value="UniProtKB-SubCell"/>
</dbReference>
<dbReference type="GO" id="GO:0016757">
    <property type="term" value="F:glycosyltransferase activity"/>
    <property type="evidence" value="ECO:0000318"/>
    <property type="project" value="GO_Central"/>
</dbReference>
<dbReference type="GO" id="GO:0071555">
    <property type="term" value="P:cell wall organization"/>
    <property type="evidence" value="ECO:0007669"/>
    <property type="project" value="UniProtKB-KW"/>
</dbReference>
<dbReference type="FunFam" id="3.90.550.10:FF:000007">
    <property type="entry name" value="probable xyloglucan glycosyltransferase 5"/>
    <property type="match status" value="1"/>
</dbReference>
<dbReference type="Gene3D" id="3.90.550.10">
    <property type="entry name" value="Spore Coat Polysaccharide Biosynthesis Protein SpsA, Chain A"/>
    <property type="match status" value="1"/>
</dbReference>
<dbReference type="InterPro" id="IPR001173">
    <property type="entry name" value="Glyco_trans_2-like"/>
</dbReference>
<dbReference type="InterPro" id="IPR029044">
    <property type="entry name" value="Nucleotide-diphossugar_trans"/>
</dbReference>
<dbReference type="PANTHER" id="PTHR32044">
    <property type="entry name" value="GLUCOMANNAN 4-BETA-MANNOSYLTRANSFERASE 9"/>
    <property type="match status" value="1"/>
</dbReference>
<dbReference type="PANTHER" id="PTHR32044:SF80">
    <property type="entry name" value="XYLOGLUCAN GLYCOSYLTRANSFERASE 2-RELATED"/>
    <property type="match status" value="1"/>
</dbReference>
<dbReference type="Pfam" id="PF13632">
    <property type="entry name" value="Glyco_trans_2_3"/>
    <property type="match status" value="1"/>
</dbReference>
<dbReference type="SUPFAM" id="SSF53448">
    <property type="entry name" value="Nucleotide-diphospho-sugar transferases"/>
    <property type="match status" value="1"/>
</dbReference>
<feature type="chain" id="PRO_0000319384" description="Probable xyloglucan glycosyltransferase 2">
    <location>
        <begin position="1"/>
        <end position="698"/>
    </location>
</feature>
<feature type="transmembrane region" description="Helical" evidence="2">
    <location>
        <begin position="124"/>
        <end position="144"/>
    </location>
</feature>
<feature type="transmembrane region" description="Helical" evidence="2">
    <location>
        <begin position="190"/>
        <end position="210"/>
    </location>
</feature>
<feature type="transmembrane region" description="Helical" evidence="2">
    <location>
        <begin position="503"/>
        <end position="523"/>
    </location>
</feature>
<feature type="transmembrane region" description="Helical" evidence="2">
    <location>
        <begin position="528"/>
        <end position="548"/>
    </location>
</feature>
<feature type="transmembrane region" description="Helical" evidence="2">
    <location>
        <begin position="653"/>
        <end position="668"/>
    </location>
</feature>
<feature type="transmembrane region" description="Helical" evidence="2">
    <location>
        <begin position="673"/>
        <end position="693"/>
    </location>
</feature>
<feature type="active site" evidence="2">
    <location>
        <position position="272"/>
    </location>
</feature>
<feature type="active site" evidence="2">
    <location>
        <position position="425"/>
    </location>
</feature>
<feature type="binding site" evidence="2">
    <location>
        <position position="331"/>
    </location>
    <ligand>
        <name>substrate</name>
    </ligand>
</feature>
<feature type="binding site" evidence="2">
    <location>
        <position position="333"/>
    </location>
    <ligand>
        <name>substrate</name>
    </ligand>
</feature>
<name>CSLC2_ORYSJ</name>
<gene>
    <name type="primary">CSLC2</name>
    <name type="ordered locus">Os09g0428000</name>
    <name type="ordered locus">LOC_Os09g25900</name>
    <name type="ORF">OJ1299_A11.39</name>
    <name type="ORF">OsJ_028287</name>
    <name type="ORF">P0689B09.2</name>
</gene>
<accession>Q69L19</accession>
<accession>A3BZ15</accession>
<accession>Q0J1M1</accession>
<keyword id="KW-0961">Cell wall biogenesis/degradation</keyword>
<keyword id="KW-0328">Glycosyltransferase</keyword>
<keyword id="KW-0333">Golgi apparatus</keyword>
<keyword id="KW-0472">Membrane</keyword>
<keyword id="KW-1185">Reference proteome</keyword>
<keyword id="KW-0808">Transferase</keyword>
<keyword id="KW-0812">Transmembrane</keyword>
<keyword id="KW-1133">Transmembrane helix</keyword>
<organism>
    <name type="scientific">Oryza sativa subsp. japonica</name>
    <name type="common">Rice</name>
    <dbReference type="NCBI Taxonomy" id="39947"/>
    <lineage>
        <taxon>Eukaryota</taxon>
        <taxon>Viridiplantae</taxon>
        <taxon>Streptophyta</taxon>
        <taxon>Embryophyta</taxon>
        <taxon>Tracheophyta</taxon>
        <taxon>Spermatophyta</taxon>
        <taxon>Magnoliopsida</taxon>
        <taxon>Liliopsida</taxon>
        <taxon>Poales</taxon>
        <taxon>Poaceae</taxon>
        <taxon>BOP clade</taxon>
        <taxon>Oryzoideae</taxon>
        <taxon>Oryzeae</taxon>
        <taxon>Oryzinae</taxon>
        <taxon>Oryza</taxon>
        <taxon>Oryza sativa</taxon>
    </lineage>
</organism>
<proteinExistence type="evidence at transcript level"/>
<reference key="1">
    <citation type="journal article" date="2005" name="Nature">
        <title>The map-based sequence of the rice genome.</title>
        <authorList>
            <consortium name="International rice genome sequencing project (IRGSP)"/>
        </authorList>
    </citation>
    <scope>NUCLEOTIDE SEQUENCE [LARGE SCALE GENOMIC DNA]</scope>
    <source>
        <strain>cv. Nipponbare</strain>
    </source>
</reference>
<reference key="2">
    <citation type="journal article" date="2008" name="Nucleic Acids Res.">
        <title>The rice annotation project database (RAP-DB): 2008 update.</title>
        <authorList>
            <consortium name="The rice annotation project (RAP)"/>
        </authorList>
    </citation>
    <scope>GENOME REANNOTATION</scope>
    <source>
        <strain>cv. Nipponbare</strain>
    </source>
</reference>
<reference key="3">
    <citation type="journal article" date="2013" name="Rice">
        <title>Improvement of the Oryza sativa Nipponbare reference genome using next generation sequence and optical map data.</title>
        <authorList>
            <person name="Kawahara Y."/>
            <person name="de la Bastide M."/>
            <person name="Hamilton J.P."/>
            <person name="Kanamori H."/>
            <person name="McCombie W.R."/>
            <person name="Ouyang S."/>
            <person name="Schwartz D.C."/>
            <person name="Tanaka T."/>
            <person name="Wu J."/>
            <person name="Zhou S."/>
            <person name="Childs K.L."/>
            <person name="Davidson R.M."/>
            <person name="Lin H."/>
            <person name="Quesada-Ocampo L."/>
            <person name="Vaillancourt B."/>
            <person name="Sakai H."/>
            <person name="Lee S.S."/>
            <person name="Kim J."/>
            <person name="Numa H."/>
            <person name="Itoh T."/>
            <person name="Buell C.R."/>
            <person name="Matsumoto T."/>
        </authorList>
    </citation>
    <scope>GENOME REANNOTATION</scope>
    <source>
        <strain>cv. Nipponbare</strain>
    </source>
</reference>
<reference key="4">
    <citation type="journal article" date="2005" name="PLoS Biol.">
        <title>The genomes of Oryza sativa: a history of duplications.</title>
        <authorList>
            <person name="Yu J."/>
            <person name="Wang J."/>
            <person name="Lin W."/>
            <person name="Li S."/>
            <person name="Li H."/>
            <person name="Zhou J."/>
            <person name="Ni P."/>
            <person name="Dong W."/>
            <person name="Hu S."/>
            <person name="Zeng C."/>
            <person name="Zhang J."/>
            <person name="Zhang Y."/>
            <person name="Li R."/>
            <person name="Xu Z."/>
            <person name="Li S."/>
            <person name="Li X."/>
            <person name="Zheng H."/>
            <person name="Cong L."/>
            <person name="Lin L."/>
            <person name="Yin J."/>
            <person name="Geng J."/>
            <person name="Li G."/>
            <person name="Shi J."/>
            <person name="Liu J."/>
            <person name="Lv H."/>
            <person name="Li J."/>
            <person name="Wang J."/>
            <person name="Deng Y."/>
            <person name="Ran L."/>
            <person name="Shi X."/>
            <person name="Wang X."/>
            <person name="Wu Q."/>
            <person name="Li C."/>
            <person name="Ren X."/>
            <person name="Wang J."/>
            <person name="Wang X."/>
            <person name="Li D."/>
            <person name="Liu D."/>
            <person name="Zhang X."/>
            <person name="Ji Z."/>
            <person name="Zhao W."/>
            <person name="Sun Y."/>
            <person name="Zhang Z."/>
            <person name="Bao J."/>
            <person name="Han Y."/>
            <person name="Dong L."/>
            <person name="Ji J."/>
            <person name="Chen P."/>
            <person name="Wu S."/>
            <person name="Liu J."/>
            <person name="Xiao Y."/>
            <person name="Bu D."/>
            <person name="Tan J."/>
            <person name="Yang L."/>
            <person name="Ye C."/>
            <person name="Zhang J."/>
            <person name="Xu J."/>
            <person name="Zhou Y."/>
            <person name="Yu Y."/>
            <person name="Zhang B."/>
            <person name="Zhuang S."/>
            <person name="Wei H."/>
            <person name="Liu B."/>
            <person name="Lei M."/>
            <person name="Yu H."/>
            <person name="Li Y."/>
            <person name="Xu H."/>
            <person name="Wei S."/>
            <person name="He X."/>
            <person name="Fang L."/>
            <person name="Zhang Z."/>
            <person name="Zhang Y."/>
            <person name="Huang X."/>
            <person name="Su Z."/>
            <person name="Tong W."/>
            <person name="Li J."/>
            <person name="Tong Z."/>
            <person name="Li S."/>
            <person name="Ye J."/>
            <person name="Wang L."/>
            <person name="Fang L."/>
            <person name="Lei T."/>
            <person name="Chen C.-S."/>
            <person name="Chen H.-C."/>
            <person name="Xu Z."/>
            <person name="Li H."/>
            <person name="Huang H."/>
            <person name="Zhang F."/>
            <person name="Xu H."/>
            <person name="Li N."/>
            <person name="Zhao C."/>
            <person name="Li S."/>
            <person name="Dong L."/>
            <person name="Huang Y."/>
            <person name="Li L."/>
            <person name="Xi Y."/>
            <person name="Qi Q."/>
            <person name="Li W."/>
            <person name="Zhang B."/>
            <person name="Hu W."/>
            <person name="Zhang Y."/>
            <person name="Tian X."/>
            <person name="Jiao Y."/>
            <person name="Liang X."/>
            <person name="Jin J."/>
            <person name="Gao L."/>
            <person name="Zheng W."/>
            <person name="Hao B."/>
            <person name="Liu S.-M."/>
            <person name="Wang W."/>
            <person name="Yuan L."/>
            <person name="Cao M."/>
            <person name="McDermott J."/>
            <person name="Samudrala R."/>
            <person name="Wang J."/>
            <person name="Wong G.K.-S."/>
            <person name="Yang H."/>
        </authorList>
    </citation>
    <scope>NUCLEOTIDE SEQUENCE [LARGE SCALE GENOMIC DNA]</scope>
    <source>
        <strain>cv. Nipponbare</strain>
    </source>
</reference>
<reference key="5">
    <citation type="journal article" date="2002" name="Plant Physiol.">
        <title>Cellulose synthase-like genes of rice.</title>
        <authorList>
            <person name="Hazen S.P."/>
            <person name="Scott-Craig J.S."/>
            <person name="Walton J.D."/>
        </authorList>
    </citation>
    <scope>GENE FAMILY</scope>
    <scope>NOMENCLATURE</scope>
</reference>
<protein>
    <recommendedName>
        <fullName>Probable xyloglucan glycosyltransferase 2</fullName>
        <ecNumber>2.4.1.-</ecNumber>
    </recommendedName>
    <alternativeName>
        <fullName>Cellulose synthase-like protein C2</fullName>
    </alternativeName>
    <alternativeName>
        <fullName>OsCslC2</fullName>
    </alternativeName>
</protein>